<reference key="1">
    <citation type="submission" date="2007-10" db="EMBL/GenBank/DDBJ databases">
        <title>Complete sequence of chromosome of Desulforudis audaxviator MP104C.</title>
        <authorList>
            <person name="Copeland A."/>
            <person name="Lucas S."/>
            <person name="Lapidus A."/>
            <person name="Barry K."/>
            <person name="Glavina del Rio T."/>
            <person name="Dalin E."/>
            <person name="Tice H."/>
            <person name="Bruce D."/>
            <person name="Pitluck S."/>
            <person name="Lowry S.R."/>
            <person name="Larimer F."/>
            <person name="Land M.L."/>
            <person name="Hauser L."/>
            <person name="Kyrpides N."/>
            <person name="Ivanova N.N."/>
            <person name="Richardson P."/>
        </authorList>
    </citation>
    <scope>NUCLEOTIDE SEQUENCE [LARGE SCALE GENOMIC DNA]</scope>
    <source>
        <strain>MP104C</strain>
    </source>
</reference>
<keyword id="KW-0963">Cytoplasm</keyword>
<keyword id="KW-1185">Reference proteome</keyword>
<keyword id="KW-0690">Ribosome biogenesis</keyword>
<accession>B1I359</accession>
<proteinExistence type="inferred from homology"/>
<name>RIMP_DESAP</name>
<sequence length="154" mass="17261">MAASDIAGRVEEMARPLAERKGLELVEVQYVTEGGRRYLRVFLDKPGGINLDDCEAVSRELDRALDDVDFIPHSYVLEVSSPGLERPLKRAEDYVRFKGRLVQINTYAPLNGRKKFSGRLMGSGEEGVTILLGEHELATIPWDQISKARLAVEF</sequence>
<organism>
    <name type="scientific">Desulforudis audaxviator (strain MP104C)</name>
    <dbReference type="NCBI Taxonomy" id="477974"/>
    <lineage>
        <taxon>Bacteria</taxon>
        <taxon>Bacillati</taxon>
        <taxon>Bacillota</taxon>
        <taxon>Clostridia</taxon>
        <taxon>Thermoanaerobacterales</taxon>
        <taxon>Candidatus Desulforudaceae</taxon>
        <taxon>Candidatus Desulforudis</taxon>
    </lineage>
</organism>
<comment type="function">
    <text evidence="1">Required for maturation of 30S ribosomal subunits.</text>
</comment>
<comment type="subcellular location">
    <subcellularLocation>
        <location evidence="1">Cytoplasm</location>
    </subcellularLocation>
</comment>
<comment type="similarity">
    <text evidence="1">Belongs to the RimP family.</text>
</comment>
<gene>
    <name evidence="1" type="primary">rimP</name>
    <name type="ordered locus">Daud_0922</name>
</gene>
<dbReference type="EMBL" id="CP000860">
    <property type="protein sequence ID" value="ACA59435.1"/>
    <property type="molecule type" value="Genomic_DNA"/>
</dbReference>
<dbReference type="RefSeq" id="WP_012302021.1">
    <property type="nucleotide sequence ID" value="NC_010424.1"/>
</dbReference>
<dbReference type="SMR" id="B1I359"/>
<dbReference type="STRING" id="477974.Daud_0922"/>
<dbReference type="KEGG" id="dau:Daud_0922"/>
<dbReference type="eggNOG" id="COG0779">
    <property type="taxonomic scope" value="Bacteria"/>
</dbReference>
<dbReference type="HOGENOM" id="CLU_070525_2_2_9"/>
<dbReference type="OrthoDB" id="9805006at2"/>
<dbReference type="Proteomes" id="UP000008544">
    <property type="component" value="Chromosome"/>
</dbReference>
<dbReference type="GO" id="GO:0005829">
    <property type="term" value="C:cytosol"/>
    <property type="evidence" value="ECO:0007669"/>
    <property type="project" value="TreeGrafter"/>
</dbReference>
<dbReference type="GO" id="GO:0000028">
    <property type="term" value="P:ribosomal small subunit assembly"/>
    <property type="evidence" value="ECO:0007669"/>
    <property type="project" value="TreeGrafter"/>
</dbReference>
<dbReference type="GO" id="GO:0006412">
    <property type="term" value="P:translation"/>
    <property type="evidence" value="ECO:0007669"/>
    <property type="project" value="TreeGrafter"/>
</dbReference>
<dbReference type="CDD" id="cd01734">
    <property type="entry name" value="YlxS_C"/>
    <property type="match status" value="1"/>
</dbReference>
<dbReference type="FunFam" id="3.30.300.70:FF:000001">
    <property type="entry name" value="Ribosome maturation factor RimP"/>
    <property type="match status" value="1"/>
</dbReference>
<dbReference type="Gene3D" id="2.30.30.180">
    <property type="entry name" value="Ribosome maturation factor RimP, C-terminal domain"/>
    <property type="match status" value="1"/>
</dbReference>
<dbReference type="Gene3D" id="3.30.300.70">
    <property type="entry name" value="RimP-like superfamily, N-terminal"/>
    <property type="match status" value="1"/>
</dbReference>
<dbReference type="HAMAP" id="MF_01077">
    <property type="entry name" value="RimP"/>
    <property type="match status" value="1"/>
</dbReference>
<dbReference type="InterPro" id="IPR003728">
    <property type="entry name" value="Ribosome_maturation_RimP"/>
</dbReference>
<dbReference type="InterPro" id="IPR028998">
    <property type="entry name" value="RimP_C"/>
</dbReference>
<dbReference type="InterPro" id="IPR036847">
    <property type="entry name" value="RimP_C_sf"/>
</dbReference>
<dbReference type="InterPro" id="IPR028989">
    <property type="entry name" value="RimP_N"/>
</dbReference>
<dbReference type="InterPro" id="IPR035956">
    <property type="entry name" value="RimP_N_sf"/>
</dbReference>
<dbReference type="PANTHER" id="PTHR33867">
    <property type="entry name" value="RIBOSOME MATURATION FACTOR RIMP"/>
    <property type="match status" value="1"/>
</dbReference>
<dbReference type="PANTHER" id="PTHR33867:SF1">
    <property type="entry name" value="RIBOSOME MATURATION FACTOR RIMP"/>
    <property type="match status" value="1"/>
</dbReference>
<dbReference type="Pfam" id="PF17384">
    <property type="entry name" value="DUF150_C"/>
    <property type="match status" value="1"/>
</dbReference>
<dbReference type="Pfam" id="PF02576">
    <property type="entry name" value="RimP_N"/>
    <property type="match status" value="1"/>
</dbReference>
<dbReference type="SUPFAM" id="SSF74942">
    <property type="entry name" value="YhbC-like, C-terminal domain"/>
    <property type="match status" value="1"/>
</dbReference>
<dbReference type="SUPFAM" id="SSF75420">
    <property type="entry name" value="YhbC-like, N-terminal domain"/>
    <property type="match status" value="1"/>
</dbReference>
<feature type="chain" id="PRO_1000136758" description="Ribosome maturation factor RimP">
    <location>
        <begin position="1"/>
        <end position="154"/>
    </location>
</feature>
<evidence type="ECO:0000255" key="1">
    <source>
        <dbReference type="HAMAP-Rule" id="MF_01077"/>
    </source>
</evidence>
<protein>
    <recommendedName>
        <fullName evidence="1">Ribosome maturation factor RimP</fullName>
    </recommendedName>
</protein>